<proteinExistence type="inferred from homology"/>
<evidence type="ECO:0000255" key="1">
    <source>
        <dbReference type="HAMAP-Rule" id="MF_01366"/>
    </source>
</evidence>
<evidence type="ECO:0000305" key="2"/>
<keyword id="KW-0687">Ribonucleoprotein</keyword>
<keyword id="KW-0689">Ribosomal protein</keyword>
<comment type="function">
    <text evidence="1">This protein is one of the early assembly proteins of the 50S ribosomal subunit, although it is not seen to bind rRNA by itself. It is important during the early stages of 50S assembly.</text>
</comment>
<comment type="subunit">
    <text evidence="1">Part of the 50S ribosomal subunit.</text>
</comment>
<comment type="similarity">
    <text evidence="1">Belongs to the universal ribosomal protein uL13 family.</text>
</comment>
<organism>
    <name type="scientific">Escherichia coli (strain SE11)</name>
    <dbReference type="NCBI Taxonomy" id="409438"/>
    <lineage>
        <taxon>Bacteria</taxon>
        <taxon>Pseudomonadati</taxon>
        <taxon>Pseudomonadota</taxon>
        <taxon>Gammaproteobacteria</taxon>
        <taxon>Enterobacterales</taxon>
        <taxon>Enterobacteriaceae</taxon>
        <taxon>Escherichia</taxon>
    </lineage>
</organism>
<protein>
    <recommendedName>
        <fullName evidence="1">Large ribosomal subunit protein uL13</fullName>
    </recommendedName>
    <alternativeName>
        <fullName evidence="2">50S ribosomal protein L13</fullName>
    </alternativeName>
</protein>
<sequence length="142" mass="16019">MKTFTAKPETVKRDWYVVDATGKTLGRLATELARRLRGKHKAEYTPHVDTGDYIIVLNADKVAVTGNKRTDKVYYHHTGHIGGIKQATFEEMIARRPERVIEIAVKGMLPKGPLGRAMFRKLKVYAGNEHNHAAQQPQVLDI</sequence>
<accession>B6I1U9</accession>
<gene>
    <name evidence="1" type="primary">rplM</name>
    <name type="ordered locus">ECSE_3510</name>
</gene>
<feature type="chain" id="PRO_1000144126" description="Large ribosomal subunit protein uL13">
    <location>
        <begin position="1"/>
        <end position="142"/>
    </location>
</feature>
<dbReference type="EMBL" id="AP009240">
    <property type="protein sequence ID" value="BAG79034.1"/>
    <property type="molecule type" value="Genomic_DNA"/>
</dbReference>
<dbReference type="RefSeq" id="WP_000847559.1">
    <property type="nucleotide sequence ID" value="NC_011415.1"/>
</dbReference>
<dbReference type="SMR" id="B6I1U9"/>
<dbReference type="GeneID" id="89518067"/>
<dbReference type="KEGG" id="ecy:ECSE_3510"/>
<dbReference type="HOGENOM" id="CLU_082184_2_2_6"/>
<dbReference type="Proteomes" id="UP000008199">
    <property type="component" value="Chromosome"/>
</dbReference>
<dbReference type="GO" id="GO:0022625">
    <property type="term" value="C:cytosolic large ribosomal subunit"/>
    <property type="evidence" value="ECO:0007669"/>
    <property type="project" value="TreeGrafter"/>
</dbReference>
<dbReference type="GO" id="GO:0003729">
    <property type="term" value="F:mRNA binding"/>
    <property type="evidence" value="ECO:0007669"/>
    <property type="project" value="TreeGrafter"/>
</dbReference>
<dbReference type="GO" id="GO:0003735">
    <property type="term" value="F:structural constituent of ribosome"/>
    <property type="evidence" value="ECO:0007669"/>
    <property type="project" value="InterPro"/>
</dbReference>
<dbReference type="GO" id="GO:0017148">
    <property type="term" value="P:negative regulation of translation"/>
    <property type="evidence" value="ECO:0007669"/>
    <property type="project" value="TreeGrafter"/>
</dbReference>
<dbReference type="GO" id="GO:0006412">
    <property type="term" value="P:translation"/>
    <property type="evidence" value="ECO:0007669"/>
    <property type="project" value="UniProtKB-UniRule"/>
</dbReference>
<dbReference type="CDD" id="cd00392">
    <property type="entry name" value="Ribosomal_L13"/>
    <property type="match status" value="1"/>
</dbReference>
<dbReference type="FunFam" id="3.90.1180.10:FF:000001">
    <property type="entry name" value="50S ribosomal protein L13"/>
    <property type="match status" value="1"/>
</dbReference>
<dbReference type="Gene3D" id="3.90.1180.10">
    <property type="entry name" value="Ribosomal protein L13"/>
    <property type="match status" value="1"/>
</dbReference>
<dbReference type="HAMAP" id="MF_01366">
    <property type="entry name" value="Ribosomal_uL13"/>
    <property type="match status" value="1"/>
</dbReference>
<dbReference type="InterPro" id="IPR005822">
    <property type="entry name" value="Ribosomal_uL13"/>
</dbReference>
<dbReference type="InterPro" id="IPR005823">
    <property type="entry name" value="Ribosomal_uL13_bac-type"/>
</dbReference>
<dbReference type="InterPro" id="IPR023563">
    <property type="entry name" value="Ribosomal_uL13_CS"/>
</dbReference>
<dbReference type="InterPro" id="IPR036899">
    <property type="entry name" value="Ribosomal_uL13_sf"/>
</dbReference>
<dbReference type="NCBIfam" id="TIGR01066">
    <property type="entry name" value="rplM_bact"/>
    <property type="match status" value="1"/>
</dbReference>
<dbReference type="PANTHER" id="PTHR11545:SF2">
    <property type="entry name" value="LARGE RIBOSOMAL SUBUNIT PROTEIN UL13M"/>
    <property type="match status" value="1"/>
</dbReference>
<dbReference type="PANTHER" id="PTHR11545">
    <property type="entry name" value="RIBOSOMAL PROTEIN L13"/>
    <property type="match status" value="1"/>
</dbReference>
<dbReference type="Pfam" id="PF00572">
    <property type="entry name" value="Ribosomal_L13"/>
    <property type="match status" value="1"/>
</dbReference>
<dbReference type="PIRSF" id="PIRSF002181">
    <property type="entry name" value="Ribosomal_L13"/>
    <property type="match status" value="1"/>
</dbReference>
<dbReference type="SUPFAM" id="SSF52161">
    <property type="entry name" value="Ribosomal protein L13"/>
    <property type="match status" value="1"/>
</dbReference>
<dbReference type="PROSITE" id="PS00783">
    <property type="entry name" value="RIBOSOMAL_L13"/>
    <property type="match status" value="1"/>
</dbReference>
<name>RL13_ECOSE</name>
<reference key="1">
    <citation type="journal article" date="2008" name="DNA Res.">
        <title>Complete genome sequence and comparative analysis of the wild-type commensal Escherichia coli strain SE11 isolated from a healthy adult.</title>
        <authorList>
            <person name="Oshima K."/>
            <person name="Toh H."/>
            <person name="Ogura Y."/>
            <person name="Sasamoto H."/>
            <person name="Morita H."/>
            <person name="Park S.-H."/>
            <person name="Ooka T."/>
            <person name="Iyoda S."/>
            <person name="Taylor T.D."/>
            <person name="Hayashi T."/>
            <person name="Itoh K."/>
            <person name="Hattori M."/>
        </authorList>
    </citation>
    <scope>NUCLEOTIDE SEQUENCE [LARGE SCALE GENOMIC DNA]</scope>
    <source>
        <strain>SE11</strain>
    </source>
</reference>